<name>TPQ_RANTE</name>
<proteinExistence type="evidence at protein level"/>
<sequence>LVPFLGKTLGGLLARF</sequence>
<protein>
    <recommendedName>
        <fullName evidence="5">Temporin-1Tq</fullName>
    </recommendedName>
    <alternativeName>
        <fullName evidence="3">Temporin-Q</fullName>
    </alternativeName>
</protein>
<feature type="peptide" id="PRO_0000456397" description="Temporin-1Tq" evidence="2">
    <location>
        <begin position="1"/>
        <end position="16"/>
    </location>
</feature>
<feature type="modified residue" description="Phenylalanine amide" evidence="2">
    <location>
        <position position="16"/>
    </location>
</feature>
<feature type="unsure residue" description="L or I" evidence="2">
    <location>
        <position position="5"/>
    </location>
</feature>
<feature type="unsure residue" description="L or I" evidence="2">
    <location>
        <position position="9"/>
    </location>
</feature>
<dbReference type="GO" id="GO:0005576">
    <property type="term" value="C:extracellular region"/>
    <property type="evidence" value="ECO:0000314"/>
    <property type="project" value="UniProtKB"/>
</dbReference>
<dbReference type="GO" id="GO:0042742">
    <property type="term" value="P:defense response to bacterium"/>
    <property type="evidence" value="ECO:0007669"/>
    <property type="project" value="UniProtKB-KW"/>
</dbReference>
<dbReference type="GO" id="GO:0045087">
    <property type="term" value="P:innate immune response"/>
    <property type="evidence" value="ECO:0007669"/>
    <property type="project" value="UniProtKB-KW"/>
</dbReference>
<keyword id="KW-0027">Amidation</keyword>
<keyword id="KW-0878">Amphibian defense peptide</keyword>
<keyword id="KW-0044">Antibiotic</keyword>
<keyword id="KW-0929">Antimicrobial</keyword>
<keyword id="KW-0903">Direct protein sequencing</keyword>
<keyword id="KW-0391">Immunity</keyword>
<keyword id="KW-0399">Innate immunity</keyword>
<keyword id="KW-0964">Secreted</keyword>
<reference evidence="4" key="1">
    <citation type="journal article" date="2021" name="Anal. Bioanal. Chem.">
        <title>Differentiation of Central Slovenian and Moscow populations of Rana temporaria frogs using peptide biomarkers of temporins family.</title>
        <authorList>
            <person name="Samgina T.Y."/>
            <person name="Vasileva I.D."/>
            <person name="Kovalev S.V."/>
            <person name="Trebse P."/>
            <person name="Torkar G."/>
            <person name="Surin A.K."/>
            <person name="Zubarev R.A."/>
            <person name="Lebedev A.T."/>
        </authorList>
    </citation>
    <scope>PROTEIN SEQUENCE</scope>
    <scope>IDENTIFICATION BY MASS SPECTROMETRY</scope>
    <scope>SUBCELLULAR LOCATION</scope>
    <scope>AMIDATION AT PHE-16</scope>
    <source>
        <tissue evidence="3">Skin secretion</tissue>
    </source>
</reference>
<evidence type="ECO:0000250" key="1">
    <source>
        <dbReference type="UniProtKB" id="P79875"/>
    </source>
</evidence>
<evidence type="ECO:0000269" key="2">
    <source>
    </source>
</evidence>
<evidence type="ECO:0000303" key="3">
    <source>
    </source>
</evidence>
<evidence type="ECO:0000305" key="4"/>
<evidence type="ECO:0000305" key="5">
    <source>
    </source>
</evidence>
<organism evidence="3">
    <name type="scientific">Rana temporaria</name>
    <name type="common">European common frog</name>
    <dbReference type="NCBI Taxonomy" id="8407"/>
    <lineage>
        <taxon>Eukaryota</taxon>
        <taxon>Metazoa</taxon>
        <taxon>Chordata</taxon>
        <taxon>Craniata</taxon>
        <taxon>Vertebrata</taxon>
        <taxon>Euteleostomi</taxon>
        <taxon>Amphibia</taxon>
        <taxon>Batrachia</taxon>
        <taxon>Anura</taxon>
        <taxon>Neobatrachia</taxon>
        <taxon>Ranoidea</taxon>
        <taxon>Ranidae</taxon>
        <taxon>Rana</taxon>
        <taxon>Rana</taxon>
    </lineage>
</organism>
<accession>C0HM31</accession>
<comment type="function">
    <text evidence="1">Antimicrobial peptide.</text>
</comment>
<comment type="subcellular location">
    <subcellularLocation>
        <location evidence="2">Secreted</location>
    </subcellularLocation>
</comment>
<comment type="tissue specificity">
    <text evidence="5">Expressed by the skin glands.</text>
</comment>
<comment type="mass spectrometry"/>
<comment type="similarity">
    <text evidence="3">Belongs to the frog skin active peptide (FSAP) family. Temporin subfamily.</text>
</comment>